<keyword id="KW-0963">Cytoplasm</keyword>
<keyword id="KW-0489">Methyltransferase</keyword>
<keyword id="KW-1185">Reference proteome</keyword>
<keyword id="KW-0698">rRNA processing</keyword>
<keyword id="KW-0949">S-adenosyl-L-methionine</keyword>
<keyword id="KW-0808">Transferase</keyword>
<comment type="function">
    <text evidence="1">Specifically methylates the N7 position of guanine in position 527 of 16S rRNA.</text>
</comment>
<comment type="catalytic activity">
    <reaction evidence="1">
        <text>guanosine(527) in 16S rRNA + S-adenosyl-L-methionine = N(7)-methylguanosine(527) in 16S rRNA + S-adenosyl-L-homocysteine</text>
        <dbReference type="Rhea" id="RHEA:42732"/>
        <dbReference type="Rhea" id="RHEA-COMP:10209"/>
        <dbReference type="Rhea" id="RHEA-COMP:10210"/>
        <dbReference type="ChEBI" id="CHEBI:57856"/>
        <dbReference type="ChEBI" id="CHEBI:59789"/>
        <dbReference type="ChEBI" id="CHEBI:74269"/>
        <dbReference type="ChEBI" id="CHEBI:74480"/>
        <dbReference type="EC" id="2.1.1.170"/>
    </reaction>
</comment>
<comment type="subcellular location">
    <subcellularLocation>
        <location evidence="1">Cytoplasm</location>
    </subcellularLocation>
</comment>
<comment type="similarity">
    <text evidence="1">Belongs to the methyltransferase superfamily. RNA methyltransferase RsmG family.</text>
</comment>
<name>RSMG_ACIET</name>
<gene>
    <name evidence="1" type="primary">rsmG</name>
    <name type="ordered locus">Dtpsy_0046</name>
</gene>
<evidence type="ECO:0000255" key="1">
    <source>
        <dbReference type="HAMAP-Rule" id="MF_00074"/>
    </source>
</evidence>
<feature type="chain" id="PRO_1000118185" description="Ribosomal RNA small subunit methyltransferase G">
    <location>
        <begin position="1"/>
        <end position="226"/>
    </location>
</feature>
<feature type="binding site" evidence="1">
    <location>
        <position position="95"/>
    </location>
    <ligand>
        <name>S-adenosyl-L-methionine</name>
        <dbReference type="ChEBI" id="CHEBI:59789"/>
    </ligand>
</feature>
<feature type="binding site" evidence="1">
    <location>
        <position position="100"/>
    </location>
    <ligand>
        <name>S-adenosyl-L-methionine</name>
        <dbReference type="ChEBI" id="CHEBI:59789"/>
    </ligand>
</feature>
<feature type="binding site" evidence="1">
    <location>
        <begin position="146"/>
        <end position="147"/>
    </location>
    <ligand>
        <name>S-adenosyl-L-methionine</name>
        <dbReference type="ChEBI" id="CHEBI:59789"/>
    </ligand>
</feature>
<feature type="binding site" evidence="1">
    <location>
        <position position="159"/>
    </location>
    <ligand>
        <name>S-adenosyl-L-methionine</name>
        <dbReference type="ChEBI" id="CHEBI:59789"/>
    </ligand>
</feature>
<dbReference type="EC" id="2.1.1.170" evidence="1"/>
<dbReference type="EMBL" id="CP001392">
    <property type="protein sequence ID" value="ACM31535.1"/>
    <property type="molecule type" value="Genomic_DNA"/>
</dbReference>
<dbReference type="RefSeq" id="WP_012655163.1">
    <property type="nucleotide sequence ID" value="NC_011992.1"/>
</dbReference>
<dbReference type="SMR" id="B9M9W4"/>
<dbReference type="KEGG" id="dia:Dtpsy_0046"/>
<dbReference type="eggNOG" id="COG0357">
    <property type="taxonomic scope" value="Bacteria"/>
</dbReference>
<dbReference type="HOGENOM" id="CLU_065341_2_0_4"/>
<dbReference type="Proteomes" id="UP000000450">
    <property type="component" value="Chromosome"/>
</dbReference>
<dbReference type="GO" id="GO:0005829">
    <property type="term" value="C:cytosol"/>
    <property type="evidence" value="ECO:0007669"/>
    <property type="project" value="TreeGrafter"/>
</dbReference>
<dbReference type="GO" id="GO:0070043">
    <property type="term" value="F:rRNA (guanine-N7-)-methyltransferase activity"/>
    <property type="evidence" value="ECO:0007669"/>
    <property type="project" value="UniProtKB-UniRule"/>
</dbReference>
<dbReference type="CDD" id="cd02440">
    <property type="entry name" value="AdoMet_MTases"/>
    <property type="match status" value="1"/>
</dbReference>
<dbReference type="Gene3D" id="3.40.50.150">
    <property type="entry name" value="Vaccinia Virus protein VP39"/>
    <property type="match status" value="1"/>
</dbReference>
<dbReference type="HAMAP" id="MF_00074">
    <property type="entry name" value="16SrRNA_methyltr_G"/>
    <property type="match status" value="1"/>
</dbReference>
<dbReference type="InterPro" id="IPR003682">
    <property type="entry name" value="rRNA_ssu_MeTfrase_G"/>
</dbReference>
<dbReference type="InterPro" id="IPR029063">
    <property type="entry name" value="SAM-dependent_MTases_sf"/>
</dbReference>
<dbReference type="NCBIfam" id="TIGR00138">
    <property type="entry name" value="rsmG_gidB"/>
    <property type="match status" value="1"/>
</dbReference>
<dbReference type="PANTHER" id="PTHR31760">
    <property type="entry name" value="S-ADENOSYL-L-METHIONINE-DEPENDENT METHYLTRANSFERASES SUPERFAMILY PROTEIN"/>
    <property type="match status" value="1"/>
</dbReference>
<dbReference type="PANTHER" id="PTHR31760:SF0">
    <property type="entry name" value="S-ADENOSYL-L-METHIONINE-DEPENDENT METHYLTRANSFERASES SUPERFAMILY PROTEIN"/>
    <property type="match status" value="1"/>
</dbReference>
<dbReference type="Pfam" id="PF02527">
    <property type="entry name" value="GidB"/>
    <property type="match status" value="1"/>
</dbReference>
<dbReference type="PIRSF" id="PIRSF003078">
    <property type="entry name" value="GidB"/>
    <property type="match status" value="1"/>
</dbReference>
<dbReference type="SUPFAM" id="SSF53335">
    <property type="entry name" value="S-adenosyl-L-methionine-dependent methyltransferases"/>
    <property type="match status" value="1"/>
</dbReference>
<accession>B9M9W4</accession>
<reference key="1">
    <citation type="submission" date="2009-01" db="EMBL/GenBank/DDBJ databases">
        <title>Complete sequence of Diaphorobacter sp. TPSY.</title>
        <authorList>
            <consortium name="US DOE Joint Genome Institute"/>
            <person name="Lucas S."/>
            <person name="Copeland A."/>
            <person name="Lapidus A."/>
            <person name="Glavina del Rio T."/>
            <person name="Tice H."/>
            <person name="Bruce D."/>
            <person name="Goodwin L."/>
            <person name="Pitluck S."/>
            <person name="Chertkov O."/>
            <person name="Brettin T."/>
            <person name="Detter J.C."/>
            <person name="Han C."/>
            <person name="Larimer F."/>
            <person name="Land M."/>
            <person name="Hauser L."/>
            <person name="Kyrpides N."/>
            <person name="Mikhailova N."/>
            <person name="Coates J.D."/>
        </authorList>
    </citation>
    <scope>NUCLEOTIDE SEQUENCE [LARGE SCALE GENOMIC DNA]</scope>
    <source>
        <strain>TPSY</strain>
    </source>
</reference>
<sequence>MSVVSNTSLEHALREGANALGLDLSEAQITQLLDFLALLQKWNKVYNLTAVRDPQEMLTHHLLDSLAAVPPLRRHVARRGQGGAIHLGARLLDVGSGGGLPGVVFAICCPEVDVSCVDTVAKKAAFIQQAAGTLGLSNLHGIHARVETLAGPFDVVSCRAFAALADFTAWSRQALAPHGVWLAMKGKHPHDEIAALPADVSVFHVEQLTVPGLQAERCILWLRPVA</sequence>
<protein>
    <recommendedName>
        <fullName evidence="1">Ribosomal RNA small subunit methyltransferase G</fullName>
        <ecNumber evidence="1">2.1.1.170</ecNumber>
    </recommendedName>
    <alternativeName>
        <fullName evidence="1">16S rRNA 7-methylguanosine methyltransferase</fullName>
        <shortName evidence="1">16S rRNA m7G methyltransferase</shortName>
    </alternativeName>
</protein>
<organism>
    <name type="scientific">Acidovorax ebreus (strain TPSY)</name>
    <name type="common">Diaphorobacter sp. (strain TPSY)</name>
    <dbReference type="NCBI Taxonomy" id="535289"/>
    <lineage>
        <taxon>Bacteria</taxon>
        <taxon>Pseudomonadati</taxon>
        <taxon>Pseudomonadota</taxon>
        <taxon>Betaproteobacteria</taxon>
        <taxon>Burkholderiales</taxon>
        <taxon>Comamonadaceae</taxon>
        <taxon>Diaphorobacter</taxon>
    </lineage>
</organism>
<proteinExistence type="inferred from homology"/>